<evidence type="ECO:0000250" key="1">
    <source>
        <dbReference type="UniProtKB" id="P41597"/>
    </source>
</evidence>
<evidence type="ECO:0000250" key="2">
    <source>
        <dbReference type="UniProtKB" id="P51683"/>
    </source>
</evidence>
<evidence type="ECO:0000255" key="3"/>
<evidence type="ECO:0000255" key="4">
    <source>
        <dbReference type="PROSITE-ProRule" id="PRU00521"/>
    </source>
</evidence>
<evidence type="ECO:0000269" key="5">
    <source>
    </source>
</evidence>
<comment type="function">
    <text evidence="1 2">Key functional receptor for CCL2 but can also bind CCL7 and CCL12 (By similarity). Its binding with CCL2 on monocytes and macrophages mediates chemotaxis and migration induction through the activation of the PI3K cascade, the small G protein Rac and lamellipodium protrusion (By similarity). Also acts as a receptor for the beta-defensin DEFB106A/DEFB106B (By similarity). Regulates the expression of T-cell inflammatory cytokines and T-cell differentiation, promoting the differentiation of T-cells into T-helper 17 cells (Th17) during inflammation (By similarity). Facilitates the export of mature thymocytes by enhancing directional movement of thymocytes to sphingosine-1-phosphate stimulation and up-regulation of S1P1R expression; signals through the JAK-STAT pathway to regulate FOXO1 activity leading to an increased expression of S1P1R (By similarity). Plays an important role in mediating peripheral nerve injury-induced neuropathic pain (By similarity). Increases NMDA-mediated synaptic transmission in both dopamine D1 and D2 receptor-containing neurons, which may be caused by MAPK/ERK-dependent phosphorylation of GRIN2B/NMDAR2B (By similarity). Mediates the recruitment of macrophages and monocytes to the injury site following brain injury (By similarity).</text>
</comment>
<comment type="subunit">
    <text evidence="1">Interacts with ARRB1 (By similarity). Interacts (via extracellular N-terminal region) with beta-defensin DEFB106A/DEFB106B; this interaction may preferentially require specific tyrosine sulfation on CCR2 (By similarity). Interacts with NUP85; the interaction is required for CCR2 clusters formation on the cell membrane and CCR2 signaling (By similarity).</text>
</comment>
<comment type="subcellular location">
    <subcellularLocation>
        <location evidence="1">Cell membrane</location>
        <topology evidence="3">Multi-pass membrane protein</topology>
    </subcellularLocation>
    <text evidence="1">The chemoattractant receptors are distributed throughout the cell surface; after stimulation with a ligand, such as CCL2, they are rapidly recruited into microdomain clusters at the cell membrane.</text>
</comment>
<comment type="tissue specificity">
    <text evidence="5">Expressed in lung, spleen, kidney, thymus and macrophages.</text>
</comment>
<comment type="induction">
    <text evidence="5">In animals in which experimental allergic encephalomyelitis (EAE) has been induced.</text>
</comment>
<comment type="PTM">
    <text evidence="1">N-glycosylated.</text>
</comment>
<comment type="PTM">
    <text evidence="1">Sulfation increases the affinity for both monomeric and dimeric CCL2 with stronger binding to the monomeric form (By similarity). Binding of sulfated CCR2 to CCL2 promotes conversion of CCL2 from dimer to monomer (By similarity).</text>
</comment>
<comment type="similarity">
    <text evidence="4">Belongs to the G-protein coupled receptor 1 family.</text>
</comment>
<protein>
    <recommendedName>
        <fullName>C-C chemokine receptor type 2</fullName>
        <shortName>C-C CKR-2</shortName>
        <shortName>CC-CKR-2</shortName>
        <shortName>CCR-2</shortName>
        <shortName>CCR2</shortName>
    </recommendedName>
    <cdAntigenName>CD192</cdAntigenName>
</protein>
<dbReference type="EMBL" id="U77349">
    <property type="protein sequence ID" value="AAC03242.1"/>
    <property type="molecule type" value="Genomic_DNA"/>
</dbReference>
<dbReference type="RefSeq" id="NP_068638.1">
    <property type="nucleotide sequence ID" value="NM_021866.2"/>
</dbReference>
<dbReference type="RefSeq" id="XP_038937989.1">
    <property type="nucleotide sequence ID" value="XM_039082061.2"/>
</dbReference>
<dbReference type="RefSeq" id="XP_038937991.1">
    <property type="nucleotide sequence ID" value="XM_039082063.2"/>
</dbReference>
<dbReference type="SMR" id="O55193"/>
<dbReference type="FunCoup" id="O55193">
    <property type="interactions" value="113"/>
</dbReference>
<dbReference type="BindingDB" id="O55193"/>
<dbReference type="ChEMBL" id="CHEMBL1293204"/>
<dbReference type="PhosphoSitePlus" id="O55193"/>
<dbReference type="Ensembl" id="ENSRNOT00000100998.1">
    <property type="protein sequence ID" value="ENSRNOP00000095594.1"/>
    <property type="gene ID" value="ENSRNOG00000063127.1"/>
</dbReference>
<dbReference type="Ensembl" id="ENSRNOT00000114724.1">
    <property type="protein sequence ID" value="ENSRNOP00000081733.1"/>
    <property type="gene ID" value="ENSRNOG00000063127.1"/>
</dbReference>
<dbReference type="GeneID" id="60463"/>
<dbReference type="KEGG" id="rno:60463"/>
<dbReference type="UCSC" id="RGD:620876">
    <property type="organism name" value="rat"/>
</dbReference>
<dbReference type="AGR" id="RGD:620876"/>
<dbReference type="CTD" id="729230"/>
<dbReference type="RGD" id="620876">
    <property type="gene designation" value="Ccr2"/>
</dbReference>
<dbReference type="GeneTree" id="ENSGT01020000230359"/>
<dbReference type="InParanoid" id="O55193"/>
<dbReference type="OMA" id="YHIALGC"/>
<dbReference type="OrthoDB" id="9876908at2759"/>
<dbReference type="PhylomeDB" id="O55193"/>
<dbReference type="TreeFam" id="TF330966"/>
<dbReference type="PRO" id="PR:O55193"/>
<dbReference type="Proteomes" id="UP000002494">
    <property type="component" value="Chromosome 8"/>
</dbReference>
<dbReference type="GO" id="GO:0005737">
    <property type="term" value="C:cytoplasm"/>
    <property type="evidence" value="ECO:0000266"/>
    <property type="project" value="RGD"/>
</dbReference>
<dbReference type="GO" id="GO:0030425">
    <property type="term" value="C:dendrite"/>
    <property type="evidence" value="ECO:0000314"/>
    <property type="project" value="RGD"/>
</dbReference>
<dbReference type="GO" id="GO:0009897">
    <property type="term" value="C:external side of plasma membrane"/>
    <property type="evidence" value="ECO:0000266"/>
    <property type="project" value="RGD"/>
</dbReference>
<dbReference type="GO" id="GO:0043025">
    <property type="term" value="C:neuronal cell body"/>
    <property type="evidence" value="ECO:0000314"/>
    <property type="project" value="RGD"/>
</dbReference>
<dbReference type="GO" id="GO:0043204">
    <property type="term" value="C:perikaryon"/>
    <property type="evidence" value="ECO:0000314"/>
    <property type="project" value="RGD"/>
</dbReference>
<dbReference type="GO" id="GO:0048471">
    <property type="term" value="C:perinuclear region of cytoplasm"/>
    <property type="evidence" value="ECO:0000314"/>
    <property type="project" value="RGD"/>
</dbReference>
<dbReference type="GO" id="GO:0005886">
    <property type="term" value="C:plasma membrane"/>
    <property type="evidence" value="ECO:0000250"/>
    <property type="project" value="UniProtKB"/>
</dbReference>
<dbReference type="GO" id="GO:0150001">
    <property type="term" value="C:primary dendrite"/>
    <property type="evidence" value="ECO:0000314"/>
    <property type="project" value="RGD"/>
</dbReference>
<dbReference type="GO" id="GO:0016493">
    <property type="term" value="F:C-C chemokine receptor activity"/>
    <property type="evidence" value="ECO:0000266"/>
    <property type="project" value="RGD"/>
</dbReference>
<dbReference type="GO" id="GO:0031727">
    <property type="term" value="F:CCR2 chemokine receptor binding"/>
    <property type="evidence" value="ECO:0000266"/>
    <property type="project" value="RGD"/>
</dbReference>
<dbReference type="GO" id="GO:0035716">
    <property type="term" value="F:chemokine (C-C motif) ligand 12 binding"/>
    <property type="evidence" value="ECO:0000266"/>
    <property type="project" value="RGD"/>
</dbReference>
<dbReference type="GO" id="GO:0035715">
    <property type="term" value="F:chemokine (C-C motif) ligand 2 binding"/>
    <property type="evidence" value="ECO:0000266"/>
    <property type="project" value="RGD"/>
</dbReference>
<dbReference type="GO" id="GO:0071791">
    <property type="term" value="F:chemokine (C-C motif) ligand 5 binding"/>
    <property type="evidence" value="ECO:0000318"/>
    <property type="project" value="GO_Central"/>
</dbReference>
<dbReference type="GO" id="GO:0035717">
    <property type="term" value="F:chemokine (C-C motif) ligand 7 binding"/>
    <property type="evidence" value="ECO:0000266"/>
    <property type="project" value="RGD"/>
</dbReference>
<dbReference type="GO" id="GO:0019955">
    <property type="term" value="F:cytokine binding"/>
    <property type="evidence" value="ECO:0000266"/>
    <property type="project" value="RGD"/>
</dbReference>
<dbReference type="GO" id="GO:0042802">
    <property type="term" value="F:identical protein binding"/>
    <property type="evidence" value="ECO:0000353"/>
    <property type="project" value="BHF-UCL"/>
</dbReference>
<dbReference type="GO" id="GO:0001974">
    <property type="term" value="P:blood vessel remodeling"/>
    <property type="evidence" value="ECO:0000270"/>
    <property type="project" value="RGD"/>
</dbReference>
<dbReference type="GO" id="GO:0019722">
    <property type="term" value="P:calcium-mediated signaling"/>
    <property type="evidence" value="ECO:0000318"/>
    <property type="project" value="GO_Central"/>
</dbReference>
<dbReference type="GO" id="GO:0060326">
    <property type="term" value="P:cell chemotaxis"/>
    <property type="evidence" value="ECO:0000318"/>
    <property type="project" value="GO_Central"/>
</dbReference>
<dbReference type="GO" id="GO:0006968">
    <property type="term" value="P:cellular defense response"/>
    <property type="evidence" value="ECO:0000266"/>
    <property type="project" value="RGD"/>
</dbReference>
<dbReference type="GO" id="GO:0019725">
    <property type="term" value="P:cellular homeostasis"/>
    <property type="evidence" value="ECO:0000250"/>
    <property type="project" value="BHF-UCL"/>
</dbReference>
<dbReference type="GO" id="GO:0070098">
    <property type="term" value="P:chemokine-mediated signaling pathway"/>
    <property type="evidence" value="ECO:0000315"/>
    <property type="project" value="RGD"/>
</dbReference>
<dbReference type="GO" id="GO:0019221">
    <property type="term" value="P:cytokine-mediated signaling pathway"/>
    <property type="evidence" value="ECO:0000315"/>
    <property type="project" value="RGD"/>
</dbReference>
<dbReference type="GO" id="GO:0007186">
    <property type="term" value="P:G protein-coupled receptor signaling pathway"/>
    <property type="evidence" value="ECO:0000315"/>
    <property type="project" value="RGD"/>
</dbReference>
<dbReference type="GO" id="GO:0030097">
    <property type="term" value="P:hemopoiesis"/>
    <property type="evidence" value="ECO:0000266"/>
    <property type="project" value="RGD"/>
</dbReference>
<dbReference type="GO" id="GO:0048873">
    <property type="term" value="P:homeostasis of number of cells within a tissue"/>
    <property type="evidence" value="ECO:0000266"/>
    <property type="project" value="RGD"/>
</dbReference>
<dbReference type="GO" id="GO:0006959">
    <property type="term" value="P:humoral immune response"/>
    <property type="evidence" value="ECO:0000266"/>
    <property type="project" value="RGD"/>
</dbReference>
<dbReference type="GO" id="GO:0006955">
    <property type="term" value="P:immune response"/>
    <property type="evidence" value="ECO:0000266"/>
    <property type="project" value="RGD"/>
</dbReference>
<dbReference type="GO" id="GO:0006954">
    <property type="term" value="P:inflammatory response"/>
    <property type="evidence" value="ECO:0000266"/>
    <property type="project" value="RGD"/>
</dbReference>
<dbReference type="GO" id="GO:0002437">
    <property type="term" value="P:inflammatory response to antigenic stimulus"/>
    <property type="evidence" value="ECO:0000270"/>
    <property type="project" value="RGD"/>
</dbReference>
<dbReference type="GO" id="GO:0090594">
    <property type="term" value="P:inflammatory response to wounding"/>
    <property type="evidence" value="ECO:0000250"/>
    <property type="project" value="UniProtKB"/>
</dbReference>
<dbReference type="GO" id="GO:0006874">
    <property type="term" value="P:intracellular calcium ion homeostasis"/>
    <property type="evidence" value="ECO:0000314"/>
    <property type="project" value="RGD"/>
</dbReference>
<dbReference type="GO" id="GO:0061756">
    <property type="term" value="P:leukocyte adhesion to vascular endothelial cell"/>
    <property type="evidence" value="ECO:0000266"/>
    <property type="project" value="RGD"/>
</dbReference>
<dbReference type="GO" id="GO:1905517">
    <property type="term" value="P:macrophage migration"/>
    <property type="evidence" value="ECO:0000250"/>
    <property type="project" value="UniProtKB"/>
</dbReference>
<dbReference type="GO" id="GO:0002548">
    <property type="term" value="P:monocyte chemotaxis"/>
    <property type="evidence" value="ECO:0000266"/>
    <property type="project" value="RGD"/>
</dbReference>
<dbReference type="GO" id="GO:0035696">
    <property type="term" value="P:monocyte extravasation"/>
    <property type="evidence" value="ECO:0000250"/>
    <property type="project" value="UniProtKB"/>
</dbReference>
<dbReference type="GO" id="GO:0016525">
    <property type="term" value="P:negative regulation of angiogenesis"/>
    <property type="evidence" value="ECO:0000250"/>
    <property type="project" value="BHF-UCL"/>
</dbReference>
<dbReference type="GO" id="GO:0043310">
    <property type="term" value="P:negative regulation of eosinophil degranulation"/>
    <property type="evidence" value="ECO:0000250"/>
    <property type="project" value="BHF-UCL"/>
</dbReference>
<dbReference type="GO" id="GO:0002829">
    <property type="term" value="P:negative regulation of type 2 immune response"/>
    <property type="evidence" value="ECO:0000250"/>
    <property type="project" value="BHF-UCL"/>
</dbReference>
<dbReference type="GO" id="GO:0097350">
    <property type="term" value="P:neutrophil clearance"/>
    <property type="evidence" value="ECO:0000266"/>
    <property type="project" value="RGD"/>
</dbReference>
<dbReference type="GO" id="GO:0046641">
    <property type="term" value="P:positive regulation of alpha-beta T cell proliferation"/>
    <property type="evidence" value="ECO:0000250"/>
    <property type="project" value="BHF-UCL"/>
</dbReference>
<dbReference type="GO" id="GO:2000464">
    <property type="term" value="P:positive regulation of astrocyte chemotaxis"/>
    <property type="evidence" value="ECO:0000250"/>
    <property type="project" value="BHF-UCL"/>
</dbReference>
<dbReference type="GO" id="GO:2000451">
    <property type="term" value="P:positive regulation of CD8-positive, alpha-beta T cell extravasation"/>
    <property type="evidence" value="ECO:0000250"/>
    <property type="project" value="BHF-UCL"/>
</dbReference>
<dbReference type="GO" id="GO:0120162">
    <property type="term" value="P:positive regulation of cold-induced thermogenesis"/>
    <property type="evidence" value="ECO:0000250"/>
    <property type="project" value="YuBioLab"/>
</dbReference>
<dbReference type="GO" id="GO:0007204">
    <property type="term" value="P:positive regulation of cytosolic calcium ion concentration"/>
    <property type="evidence" value="ECO:0000318"/>
    <property type="project" value="GO_Central"/>
</dbReference>
<dbReference type="GO" id="GO:1900451">
    <property type="term" value="P:positive regulation of glutamate receptor signaling pathway"/>
    <property type="evidence" value="ECO:0000316"/>
    <property type="project" value="ARUK-UCL"/>
</dbReference>
<dbReference type="GO" id="GO:2000473">
    <property type="term" value="P:positive regulation of hematopoietic stem cell migration"/>
    <property type="evidence" value="ECO:0000250"/>
    <property type="project" value="BHF-UCL"/>
</dbReference>
<dbReference type="GO" id="GO:0090265">
    <property type="term" value="P:positive regulation of immune complex clearance by monocytes and macrophages"/>
    <property type="evidence" value="ECO:0000250"/>
    <property type="project" value="BHF-UCL"/>
</dbReference>
<dbReference type="GO" id="GO:0050729">
    <property type="term" value="P:positive regulation of inflammatory response"/>
    <property type="evidence" value="ECO:0000250"/>
    <property type="project" value="BHF-UCL"/>
</dbReference>
<dbReference type="GO" id="GO:0032743">
    <property type="term" value="P:positive regulation of interleukin-2 production"/>
    <property type="evidence" value="ECO:0000250"/>
    <property type="project" value="BHF-UCL"/>
</dbReference>
<dbReference type="GO" id="GO:1903238">
    <property type="term" value="P:positive regulation of leukocyte tethering or rolling"/>
    <property type="evidence" value="ECO:0000266"/>
    <property type="project" value="RGD"/>
</dbReference>
<dbReference type="GO" id="GO:0090026">
    <property type="term" value="P:positive regulation of monocyte chemotaxis"/>
    <property type="evidence" value="ECO:0000250"/>
    <property type="project" value="UniProtKB"/>
</dbReference>
<dbReference type="GO" id="GO:2000439">
    <property type="term" value="P:positive regulation of monocyte extravasation"/>
    <property type="evidence" value="ECO:0000250"/>
    <property type="project" value="BHF-UCL"/>
</dbReference>
<dbReference type="GO" id="GO:1900745">
    <property type="term" value="P:positive regulation of p38MAPK cascade"/>
    <property type="evidence" value="ECO:0000314"/>
    <property type="project" value="RGD"/>
</dbReference>
<dbReference type="GO" id="GO:0051968">
    <property type="term" value="P:positive regulation of synaptic transmission, glutamatergic"/>
    <property type="evidence" value="ECO:0000250"/>
    <property type="project" value="UniProtKB"/>
</dbReference>
<dbReference type="GO" id="GO:0050870">
    <property type="term" value="P:positive regulation of T cell activation"/>
    <property type="evidence" value="ECO:0000250"/>
    <property type="project" value="BHF-UCL"/>
</dbReference>
<dbReference type="GO" id="GO:0010820">
    <property type="term" value="P:positive regulation of T cell chemotaxis"/>
    <property type="evidence" value="ECO:0000250"/>
    <property type="project" value="BHF-UCL"/>
</dbReference>
<dbReference type="GO" id="GO:0002827">
    <property type="term" value="P:positive regulation of T-helper 1 type immune response"/>
    <property type="evidence" value="ECO:0000250"/>
    <property type="project" value="BHF-UCL"/>
</dbReference>
<dbReference type="GO" id="GO:2000412">
    <property type="term" value="P:positive regulation of thymocyte migration"/>
    <property type="evidence" value="ECO:0000250"/>
    <property type="project" value="UniProtKB"/>
</dbReference>
<dbReference type="GO" id="GO:0032760">
    <property type="term" value="P:positive regulation of tumor necrosis factor production"/>
    <property type="evidence" value="ECO:0000315"/>
    <property type="project" value="RGD"/>
</dbReference>
<dbReference type="GO" id="GO:0032729">
    <property type="term" value="P:positive regulation of type II interferon production"/>
    <property type="evidence" value="ECO:0000250"/>
    <property type="project" value="BHF-UCL"/>
</dbReference>
<dbReference type="GO" id="GO:0050727">
    <property type="term" value="P:regulation of inflammatory response"/>
    <property type="evidence" value="ECO:0000250"/>
    <property type="project" value="UniProtKB"/>
</dbReference>
<dbReference type="GO" id="GO:1905521">
    <property type="term" value="P:regulation of macrophage migration"/>
    <property type="evidence" value="ECO:0000266"/>
    <property type="project" value="RGD"/>
</dbReference>
<dbReference type="GO" id="GO:0071675">
    <property type="term" value="P:regulation of mononuclear cell migration"/>
    <property type="evidence" value="ECO:0000266"/>
    <property type="project" value="RGD"/>
</dbReference>
<dbReference type="GO" id="GO:0002724">
    <property type="term" value="P:regulation of T cell cytokine production"/>
    <property type="evidence" value="ECO:0000250"/>
    <property type="project" value="UniProtKB"/>
</dbReference>
<dbReference type="GO" id="GO:0045580">
    <property type="term" value="P:regulation of T cell differentiation"/>
    <property type="evidence" value="ECO:0000250"/>
    <property type="project" value="UniProtKB"/>
</dbReference>
<dbReference type="GO" id="GO:2000404">
    <property type="term" value="P:regulation of T cell migration"/>
    <property type="evidence" value="ECO:0000266"/>
    <property type="project" value="RGD"/>
</dbReference>
<dbReference type="GO" id="GO:0010574">
    <property type="term" value="P:regulation of vascular endothelial growth factor production"/>
    <property type="evidence" value="ECO:0000250"/>
    <property type="project" value="BHF-UCL"/>
</dbReference>
<dbReference type="GO" id="GO:0055093">
    <property type="term" value="P:response to hyperoxia"/>
    <property type="evidence" value="ECO:0000270"/>
    <property type="project" value="RGD"/>
</dbReference>
<dbReference type="GO" id="GO:0001666">
    <property type="term" value="P:response to hypoxia"/>
    <property type="evidence" value="ECO:0000270"/>
    <property type="project" value="RGD"/>
</dbReference>
<dbReference type="GO" id="GO:0019233">
    <property type="term" value="P:sensory perception of pain"/>
    <property type="evidence" value="ECO:0000250"/>
    <property type="project" value="UniProtKB"/>
</dbReference>
<dbReference type="GO" id="GO:0035705">
    <property type="term" value="P:T-helper 17 cell chemotaxis"/>
    <property type="evidence" value="ECO:0000250"/>
    <property type="project" value="BHF-UCL"/>
</dbReference>
<dbReference type="CDD" id="cd15184">
    <property type="entry name" value="7tmA_CCR5_CCR2"/>
    <property type="match status" value="1"/>
</dbReference>
<dbReference type="FunFam" id="1.20.1070.10:FF:000026">
    <property type="entry name" value="C-C chemokine receptor type 5"/>
    <property type="match status" value="1"/>
</dbReference>
<dbReference type="Gene3D" id="1.20.1070.10">
    <property type="entry name" value="Rhodopsin 7-helix transmembrane proteins"/>
    <property type="match status" value="1"/>
</dbReference>
<dbReference type="InterPro" id="IPR050119">
    <property type="entry name" value="CCR1-9-like"/>
</dbReference>
<dbReference type="InterPro" id="IPR002237">
    <property type="entry name" value="Chemokine_CCR2"/>
</dbReference>
<dbReference type="InterPro" id="IPR000355">
    <property type="entry name" value="Chemokine_rcpt"/>
</dbReference>
<dbReference type="InterPro" id="IPR000276">
    <property type="entry name" value="GPCR_Rhodpsn"/>
</dbReference>
<dbReference type="InterPro" id="IPR017452">
    <property type="entry name" value="GPCR_Rhodpsn_7TM"/>
</dbReference>
<dbReference type="PANTHER" id="PTHR10489:SF928">
    <property type="entry name" value="C-C CHEMOKINE RECEPTOR TYPE 2"/>
    <property type="match status" value="1"/>
</dbReference>
<dbReference type="PANTHER" id="PTHR10489">
    <property type="entry name" value="CELL ADHESION MOLECULE"/>
    <property type="match status" value="1"/>
</dbReference>
<dbReference type="Pfam" id="PF00001">
    <property type="entry name" value="7tm_1"/>
    <property type="match status" value="1"/>
</dbReference>
<dbReference type="PRINTS" id="PR00657">
    <property type="entry name" value="CCCHEMOKINER"/>
</dbReference>
<dbReference type="PRINTS" id="PR01107">
    <property type="entry name" value="CHEMOKINER2"/>
</dbReference>
<dbReference type="PRINTS" id="PR00237">
    <property type="entry name" value="GPCRRHODOPSN"/>
</dbReference>
<dbReference type="SMART" id="SM01381">
    <property type="entry name" value="7TM_GPCR_Srsx"/>
    <property type="match status" value="1"/>
</dbReference>
<dbReference type="SUPFAM" id="SSF81321">
    <property type="entry name" value="Family A G protein-coupled receptor-like"/>
    <property type="match status" value="1"/>
</dbReference>
<dbReference type="PROSITE" id="PS00237">
    <property type="entry name" value="G_PROTEIN_RECEP_F1_1"/>
    <property type="match status" value="1"/>
</dbReference>
<dbReference type="PROSITE" id="PS50262">
    <property type="entry name" value="G_PROTEIN_RECEP_F1_2"/>
    <property type="match status" value="1"/>
</dbReference>
<keyword id="KW-1003">Cell membrane</keyword>
<keyword id="KW-1015">Disulfide bond</keyword>
<keyword id="KW-0297">G-protein coupled receptor</keyword>
<keyword id="KW-0325">Glycoprotein</keyword>
<keyword id="KW-0395">Inflammatory response</keyword>
<keyword id="KW-0472">Membrane</keyword>
<keyword id="KW-0597">Phosphoprotein</keyword>
<keyword id="KW-0675">Receptor</keyword>
<keyword id="KW-1185">Reference proteome</keyword>
<keyword id="KW-0807">Transducer</keyword>
<keyword id="KW-0812">Transmembrane</keyword>
<keyword id="KW-1133">Transmembrane helix</keyword>
<reference key="1">
    <citation type="journal article" date="1998" name="J. Neuroimmunol.">
        <title>Chemokine receptor expression in cultured glia and rat experimental allergic encephalomyelitis.</title>
        <authorList>
            <person name="Jiang Y."/>
            <person name="Salafranca M.N."/>
            <person name="Adhikari S."/>
            <person name="Xia Y."/>
            <person name="Feng L."/>
            <person name="Sonntag M.K."/>
            <person name="deFiebre C.M."/>
            <person name="Pennell N.A."/>
            <person name="Streit W.J."/>
            <person name="Harrison J.K."/>
        </authorList>
    </citation>
    <scope>NUCLEOTIDE SEQUENCE [GENOMIC DNA]</scope>
    <scope>INDUCTION</scope>
    <scope>TISSUE SPECIFICITY</scope>
    <source>
        <strain>Sprague-Dawley</strain>
    </source>
</reference>
<gene>
    <name type="primary">Ccr2</name>
    <name type="synonym">Cmkbr2</name>
</gene>
<feature type="chain" id="PRO_0000069235" description="C-C chemokine receptor type 2">
    <location>
        <begin position="1"/>
        <end position="373"/>
    </location>
</feature>
<feature type="topological domain" description="Extracellular" evidence="3">
    <location>
        <begin position="1"/>
        <end position="60"/>
    </location>
</feature>
<feature type="transmembrane region" description="Helical; Name=1" evidence="3">
    <location>
        <begin position="61"/>
        <end position="81"/>
    </location>
</feature>
<feature type="topological domain" description="Cytoplasmic" evidence="3">
    <location>
        <begin position="82"/>
        <end position="91"/>
    </location>
</feature>
<feature type="transmembrane region" description="Helical; Name=2" evidence="3">
    <location>
        <begin position="92"/>
        <end position="112"/>
    </location>
</feature>
<feature type="topological domain" description="Extracellular" evidence="3">
    <location>
        <begin position="113"/>
        <end position="128"/>
    </location>
</feature>
<feature type="transmembrane region" description="Helical; Name=3" evidence="3">
    <location>
        <begin position="129"/>
        <end position="149"/>
    </location>
</feature>
<feature type="topological domain" description="Cytoplasmic" evidence="3">
    <location>
        <begin position="150"/>
        <end position="170"/>
    </location>
</feature>
<feature type="transmembrane region" description="Helical; Name=4" evidence="3">
    <location>
        <begin position="171"/>
        <end position="191"/>
    </location>
</feature>
<feature type="topological domain" description="Extracellular" evidence="3">
    <location>
        <begin position="192"/>
        <end position="220"/>
    </location>
</feature>
<feature type="transmembrane region" description="Helical; Name=5" evidence="3">
    <location>
        <begin position="221"/>
        <end position="241"/>
    </location>
</feature>
<feature type="topological domain" description="Cytoplasmic" evidence="3">
    <location>
        <begin position="242"/>
        <end position="256"/>
    </location>
</feature>
<feature type="transmembrane region" description="Helical; Name=6" evidence="3">
    <location>
        <begin position="257"/>
        <end position="277"/>
    </location>
</feature>
<feature type="topological domain" description="Extracellular" evidence="3">
    <location>
        <begin position="278"/>
        <end position="301"/>
    </location>
</feature>
<feature type="transmembrane region" description="Helical; Name=7" evidence="3">
    <location>
        <begin position="302"/>
        <end position="322"/>
    </location>
</feature>
<feature type="topological domain" description="Cytoplasmic" evidence="3">
    <location>
        <begin position="323"/>
        <end position="373"/>
    </location>
</feature>
<feature type="modified residue" description="Phosphotyrosine; by JAK2" evidence="1">
    <location>
        <position position="152"/>
    </location>
</feature>
<feature type="disulfide bond" evidence="4">
    <location>
        <begin position="126"/>
        <end position="203"/>
    </location>
</feature>
<proteinExistence type="evidence at transcript level"/>
<sequence>MEDSNMLPQFIHGILSTSHSLFPRSIQELDEGATTPYDYDDGEPCHKTSVKQIGAWILPPLYSLVFIFGFVGNMLVIIILISCKKLKSMTDIYLFNLAISDLLFLLTLPFWAHYAANEWVFGNIMCKLFTGLYHIGYFGGIFFIILLTIDRYLAIVHAVFALKARTVTFGVITSVVTWVVAVFASLPGIIFTKSEQEDDQHTCGPYFPTIWKNFQTIMRNILSLILPLLVMVICYSGILHTLFRCRNEKKRHRAVRLIFAIMIVYFLFWTPYNIVLFLTTFQEFLGMSNCVVDMHLDQAMQVTETLGMTHCCVNPIIYAFVGEKFRRYLSIFFRKHIAKNLCKQCPVFYRETADRVSSTFTPSTGEQEVSVGL</sequence>
<organism>
    <name type="scientific">Rattus norvegicus</name>
    <name type="common">Rat</name>
    <dbReference type="NCBI Taxonomy" id="10116"/>
    <lineage>
        <taxon>Eukaryota</taxon>
        <taxon>Metazoa</taxon>
        <taxon>Chordata</taxon>
        <taxon>Craniata</taxon>
        <taxon>Vertebrata</taxon>
        <taxon>Euteleostomi</taxon>
        <taxon>Mammalia</taxon>
        <taxon>Eutheria</taxon>
        <taxon>Euarchontoglires</taxon>
        <taxon>Glires</taxon>
        <taxon>Rodentia</taxon>
        <taxon>Myomorpha</taxon>
        <taxon>Muroidea</taxon>
        <taxon>Muridae</taxon>
        <taxon>Murinae</taxon>
        <taxon>Rattus</taxon>
    </lineage>
</organism>
<accession>O55193</accession>
<name>CCR2_RAT</name>